<name>VACHT_MOUSE</name>
<accession>O35304</accession>
<dbReference type="EMBL" id="AF019045">
    <property type="protein sequence ID" value="AAD09151.1"/>
    <property type="molecule type" value="Genomic_DNA"/>
</dbReference>
<dbReference type="CCDS" id="CCDS79291.1"/>
<dbReference type="SMR" id="O35304"/>
<dbReference type="FunCoup" id="O35304">
    <property type="interactions" value="39"/>
</dbReference>
<dbReference type="STRING" id="10090.ENSMUSP00000139829"/>
<dbReference type="GlyCosmos" id="O35304">
    <property type="glycosylation" value="2 sites, No reported glycans"/>
</dbReference>
<dbReference type="GlyGen" id="O35304">
    <property type="glycosylation" value="2 sites"/>
</dbReference>
<dbReference type="iPTMnet" id="O35304"/>
<dbReference type="PhosphoSitePlus" id="O35304"/>
<dbReference type="PaxDb" id="10090-ENSMUSP00000139829"/>
<dbReference type="ProteomicsDB" id="297907"/>
<dbReference type="ABCD" id="O35304">
    <property type="antibodies" value="2 sequenced antibodies"/>
</dbReference>
<dbReference type="AGR" id="MGI:1101061"/>
<dbReference type="MGI" id="MGI:1101061">
    <property type="gene designation" value="Slc18a3"/>
</dbReference>
<dbReference type="eggNOG" id="KOG3764">
    <property type="taxonomic scope" value="Eukaryota"/>
</dbReference>
<dbReference type="InParanoid" id="O35304"/>
<dbReference type="Reactome" id="R-MMU-264642">
    <property type="pathway name" value="Acetylcholine Neurotransmitter Release Cycle"/>
</dbReference>
<dbReference type="Reactome" id="R-MMU-8856825">
    <property type="pathway name" value="Cargo recognition for clathrin-mediated endocytosis"/>
</dbReference>
<dbReference type="Reactome" id="R-MMU-8856828">
    <property type="pathway name" value="Clathrin-mediated endocytosis"/>
</dbReference>
<dbReference type="PRO" id="PR:O35304"/>
<dbReference type="Proteomes" id="UP000000589">
    <property type="component" value="Unplaced"/>
</dbReference>
<dbReference type="RNAct" id="O35304">
    <property type="molecule type" value="protein"/>
</dbReference>
<dbReference type="GO" id="GO:0098981">
    <property type="term" value="C:cholinergic synapse"/>
    <property type="evidence" value="ECO:0000314"/>
    <property type="project" value="SynGO"/>
</dbReference>
<dbReference type="GO" id="GO:0005737">
    <property type="term" value="C:cytoplasm"/>
    <property type="evidence" value="ECO:0000314"/>
    <property type="project" value="MGI"/>
</dbReference>
<dbReference type="GO" id="GO:0043005">
    <property type="term" value="C:neuron projection"/>
    <property type="evidence" value="ECO:0000314"/>
    <property type="project" value="MGI"/>
</dbReference>
<dbReference type="GO" id="GO:0030672">
    <property type="term" value="C:synaptic vesicle membrane"/>
    <property type="evidence" value="ECO:0007669"/>
    <property type="project" value="UniProtKB-SubCell"/>
</dbReference>
<dbReference type="GO" id="GO:0043195">
    <property type="term" value="C:terminal bouton"/>
    <property type="evidence" value="ECO:0000314"/>
    <property type="project" value="MGI"/>
</dbReference>
<dbReference type="GO" id="GO:0005278">
    <property type="term" value="F:acetylcholine:proton antiporter activity"/>
    <property type="evidence" value="ECO:0000250"/>
    <property type="project" value="UniProtKB"/>
</dbReference>
<dbReference type="GO" id="GO:0008504">
    <property type="term" value="F:monoamine transmembrane transporter activity"/>
    <property type="evidence" value="ECO:0000304"/>
    <property type="project" value="MGI"/>
</dbReference>
<dbReference type="GO" id="GO:0051630">
    <property type="term" value="P:acetylcholine uptake"/>
    <property type="evidence" value="ECO:0000250"/>
    <property type="project" value="UniProtKB"/>
</dbReference>
<dbReference type="GO" id="GO:0098700">
    <property type="term" value="P:neurotransmitter loading into synaptic vesicle"/>
    <property type="evidence" value="ECO:0000314"/>
    <property type="project" value="SynGO"/>
</dbReference>
<dbReference type="GO" id="GO:0014057">
    <property type="term" value="P:positive regulation of acetylcholine secretion, neurotransmission"/>
    <property type="evidence" value="ECO:0000315"/>
    <property type="project" value="UniProtKB"/>
</dbReference>
<dbReference type="GO" id="GO:1900273">
    <property type="term" value="P:positive regulation of long-term synaptic potentiation"/>
    <property type="evidence" value="ECO:0000315"/>
    <property type="project" value="UniProtKB"/>
</dbReference>
<dbReference type="GO" id="GO:1904398">
    <property type="term" value="P:positive regulation of neuromuscular junction development"/>
    <property type="evidence" value="ECO:0000315"/>
    <property type="project" value="UniProtKB"/>
</dbReference>
<dbReference type="CDD" id="cd17383">
    <property type="entry name" value="MFS_SLC18A3_VAChT"/>
    <property type="match status" value="1"/>
</dbReference>
<dbReference type="FunFam" id="1.20.1250.20:FF:000109">
    <property type="entry name" value="Putative vesicular acetylcholine transporter"/>
    <property type="match status" value="1"/>
</dbReference>
<dbReference type="Gene3D" id="1.20.1250.20">
    <property type="entry name" value="MFS general substrate transporter like domains"/>
    <property type="match status" value="1"/>
</dbReference>
<dbReference type="InterPro" id="IPR011701">
    <property type="entry name" value="MFS"/>
</dbReference>
<dbReference type="InterPro" id="IPR020846">
    <property type="entry name" value="MFS_dom"/>
</dbReference>
<dbReference type="InterPro" id="IPR036259">
    <property type="entry name" value="MFS_trans_sf"/>
</dbReference>
<dbReference type="InterPro" id="IPR050930">
    <property type="entry name" value="MFS_Vesicular_Transporter"/>
</dbReference>
<dbReference type="PANTHER" id="PTHR23506">
    <property type="entry name" value="GH10249P"/>
    <property type="match status" value="1"/>
</dbReference>
<dbReference type="PANTHER" id="PTHR23506:SF13">
    <property type="entry name" value="VESICULAR ACETYLCHOLINE TRANSPORTER"/>
    <property type="match status" value="1"/>
</dbReference>
<dbReference type="Pfam" id="PF07690">
    <property type="entry name" value="MFS_1"/>
    <property type="match status" value="1"/>
</dbReference>
<dbReference type="SUPFAM" id="SSF103473">
    <property type="entry name" value="MFS general substrate transporter"/>
    <property type="match status" value="1"/>
</dbReference>
<dbReference type="PROSITE" id="PS50850">
    <property type="entry name" value="MFS"/>
    <property type="match status" value="1"/>
</dbReference>
<proteinExistence type="evidence at protein level"/>
<evidence type="ECO:0000250" key="1">
    <source>
        <dbReference type="UniProtKB" id="Q16572"/>
    </source>
</evidence>
<evidence type="ECO:0000250" key="2">
    <source>
        <dbReference type="UniProtKB" id="Q62666"/>
    </source>
</evidence>
<evidence type="ECO:0000255" key="3"/>
<evidence type="ECO:0000256" key="4">
    <source>
        <dbReference type="SAM" id="MobiDB-lite"/>
    </source>
</evidence>
<evidence type="ECO:0000269" key="5">
    <source>
    </source>
</evidence>
<evidence type="ECO:0000269" key="6">
    <source>
    </source>
</evidence>
<evidence type="ECO:0000269" key="7">
    <source>
    </source>
</evidence>
<evidence type="ECO:0000269" key="8">
    <source>
    </source>
</evidence>
<evidence type="ECO:0000305" key="9"/>
<keyword id="KW-0968">Cytoplasmic vesicle</keyword>
<keyword id="KW-0325">Glycoprotein</keyword>
<keyword id="KW-0472">Membrane</keyword>
<keyword id="KW-0532">Neurotransmitter transport</keyword>
<keyword id="KW-1185">Reference proteome</keyword>
<keyword id="KW-0770">Synapse</keyword>
<keyword id="KW-0812">Transmembrane</keyword>
<keyword id="KW-1133">Transmembrane helix</keyword>
<keyword id="KW-0813">Transport</keyword>
<comment type="function">
    <text evidence="1 2 6 7">Electrogenic antiporter that exchanges one cholinergic neurotransmitter, acetylcholine or choline, with two intravesicular protons across the membrane of synaptic vesicles. Uses the electrochemical proton gradient established by the V-type proton-pump ATPase to store neurotransmitters inside the vesicles prior to their release via exocytosis (By similarity). Determines cholinergic vesicular quantal size at presynaptic nerve terminals in developing neuro-muscular junctions with an impact on motor neuron differentiation and innervation pattern (By similarity) (PubMed:19635813). Part of forebrain cholinergic system, regulates hippocampal synapse transmissions that underlie spatial memory formation (PubMed:23045697). Can transport serotonin.</text>
</comment>
<comment type="catalytic activity">
    <reaction evidence="1">
        <text>acetylcholine(out) + 2 H(+)(in) = acetylcholine(in) + 2 H(+)(out)</text>
        <dbReference type="Rhea" id="RHEA:72891"/>
        <dbReference type="ChEBI" id="CHEBI:15355"/>
        <dbReference type="ChEBI" id="CHEBI:15378"/>
    </reaction>
    <physiologicalReaction direction="left-to-right" evidence="1">
        <dbReference type="Rhea" id="RHEA:72892"/>
    </physiologicalReaction>
</comment>
<comment type="catalytic activity">
    <reaction evidence="2">
        <text>choline(in) + 2 H(+)(out) = choline(out) + 2 H(+)(in)</text>
        <dbReference type="Rhea" id="RHEA:73819"/>
        <dbReference type="ChEBI" id="CHEBI:15354"/>
        <dbReference type="ChEBI" id="CHEBI:15378"/>
    </reaction>
    <physiologicalReaction direction="left-to-right" evidence="2">
        <dbReference type="Rhea" id="RHEA:73820"/>
    </physiologicalReaction>
</comment>
<comment type="catalytic activity">
    <reaction evidence="1">
        <text>serotonin(in) + 2 H(+)(out) = serotonin(out) + 2 H(+)(in)</text>
        <dbReference type="Rhea" id="RHEA:73743"/>
        <dbReference type="ChEBI" id="CHEBI:15378"/>
        <dbReference type="ChEBI" id="CHEBI:350546"/>
    </reaction>
</comment>
<comment type="subunit">
    <text evidence="5">Interacts with SEC14L1.</text>
</comment>
<comment type="subcellular location">
    <subcellularLocation>
        <location evidence="2">Cytoplasmic vesicle</location>
        <location evidence="2">Secretory vesicle</location>
        <location evidence="2">Synaptic vesicle membrane</location>
        <topology evidence="3">Multi-pass membrane protein</topology>
    </subcellularLocation>
</comment>
<comment type="tissue specificity">
    <text evidence="8">Expressed in the spinal cord, brain (excluding the cerebellum), brain stem and cholinergic tissues. Not expressed in peripheral tissues such as liver and kidney.</text>
</comment>
<comment type="disruption phenotype">
    <text evidence="6">Mutant mice die shortly after birth. Embryos at 18.5 dpc. show abnormal neuromuscular junction morphology characterized by increased number of motor neuron and presynaptic nerve termini and muscle fiber necrosis.</text>
</comment>
<comment type="similarity">
    <text evidence="9">Belongs to the major facilitator superfamily. Vesicular transporter family.</text>
</comment>
<sequence>MEPTAPTGQARAAATKLSEAVGAALQEPQRQRRLVLVIVCVALLLDNMLYMVIVPIVPDYIAHMRGGSESPTLISEVWEPTLPPPTLANASAYLANTSASPTAAGSARSILRPRYPTESEDVKIGVLFASKAILQLLVNPLSGPFIDRMSYDVPLLIGLGVMFASTVMFAFAEDYATFFAARSLQGLGSAFADTSGIAMIADKYPEEPERSRALGVALAFISFGSLVAPPFGGILYEFAGKRVPFLVLAAVSLFDALLLLAVAKPFSAAARARANLPVGTPIHRLMLDPYIAVVAGALTTCNIPLAFLEPTIATWMKHTMAASEWEMGMVWLPAFVPHVLGVYLTVRLAARYPHLQWLYGALGLAVIGVSSCVVPACRSFAPLVVSLCGLCFGIALVDTALLPTLAFLVDVRHVSVYGSVYAIADISYSVAYALGPIVAGHIVHSLGFEQLSLGMGLANLLYAPVLLLLRNVGLLTRSRSERDVLLDEPPQGLYDAVRLREVQGKDGGEPCSPPGPFDGCEDDYNYYSRS</sequence>
<reference key="1">
    <citation type="journal article" date="1997" name="NeuroReport">
        <title>Molecular characterization of the mouse vesicular acetylcholine transporter gene.</title>
        <authorList>
            <person name="Naciff J.M."/>
            <person name="Misawa H."/>
            <person name="Dedman J.R."/>
        </authorList>
    </citation>
    <scope>NUCLEOTIDE SEQUENCE [GENOMIC DNA]</scope>
    <scope>TISSUE SPECIFICITY</scope>
    <source>
        <strain>BALB/cJ</strain>
    </source>
</reference>
<reference key="2">
    <citation type="journal article" date="2007" name="Neurochem. Int.">
        <title>SEC14-like protein 1 interacts with cholinergic transporters.</title>
        <authorList>
            <person name="Ribeiro F.M."/>
            <person name="Ferreira L.T."/>
            <person name="Marion S."/>
            <person name="Fontes S."/>
            <person name="Gomez M."/>
            <person name="Ferguson S.S."/>
            <person name="Prado M.A."/>
            <person name="Prado V.F."/>
        </authorList>
    </citation>
    <scope>INTERACTION WITH SEC14L1</scope>
    <scope>REGION</scope>
</reference>
<reference key="3">
    <citation type="journal article" date="2009" name="Mol. Cell. Biol.">
        <title>The vesicular acetylcholine transporter is required for neuromuscular development and function.</title>
        <authorList>
            <person name="de Castro B.M."/>
            <person name="De Jaeger X."/>
            <person name="Martins-Silva C."/>
            <person name="Lima R.D."/>
            <person name="Amaral E."/>
            <person name="Menezes C."/>
            <person name="Lima P."/>
            <person name="Neves C.M."/>
            <person name="Pires R.G."/>
            <person name="Gould T.W."/>
            <person name="Welch I."/>
            <person name="Kushmerick C."/>
            <person name="Guatimosim C."/>
            <person name="Izquierdo I."/>
            <person name="Cammarota M."/>
            <person name="Rylett R.J."/>
            <person name="Gomez M.V."/>
            <person name="Caron M.G."/>
            <person name="Oppenheim R.W."/>
            <person name="Prado M.A."/>
            <person name="Prado V.F."/>
        </authorList>
    </citation>
    <scope>FUNCTION</scope>
    <scope>DISRUPTION PHENOTYPE</scope>
</reference>
<reference key="4">
    <citation type="journal article" date="2012" name="Proc. Natl. Acad. Sci. U.S.A.">
        <title>Elimination of the vesicular acetylcholine transporter in the forebrain causes hyperactivity and deficits in spatial memory and long-term potentiation.</title>
        <authorList>
            <person name="Martyn A.C."/>
            <person name="De Jaeger X."/>
            <person name="Magalhaes A.C."/>
            <person name="Kesarwani R."/>
            <person name="Goncalves D.F."/>
            <person name="Raulic S."/>
            <person name="Guzman M.S."/>
            <person name="Jackson M.F."/>
            <person name="Izquierdo I."/>
            <person name="Macdonald J.F."/>
            <person name="Prado M.A."/>
            <person name="Prado V.F."/>
        </authorList>
    </citation>
    <scope>FUNCTION</scope>
</reference>
<gene>
    <name type="primary">Slc18a3</name>
    <name type="synonym">Vacht</name>
</gene>
<protein>
    <recommendedName>
        <fullName>Vesicular acetylcholine transporter</fullName>
        <shortName>VAChT</shortName>
    </recommendedName>
    <alternativeName>
        <fullName>Solute carrier family 18 member 3</fullName>
    </alternativeName>
</protein>
<organism>
    <name type="scientific">Mus musculus</name>
    <name type="common">Mouse</name>
    <dbReference type="NCBI Taxonomy" id="10090"/>
    <lineage>
        <taxon>Eukaryota</taxon>
        <taxon>Metazoa</taxon>
        <taxon>Chordata</taxon>
        <taxon>Craniata</taxon>
        <taxon>Vertebrata</taxon>
        <taxon>Euteleostomi</taxon>
        <taxon>Mammalia</taxon>
        <taxon>Eutheria</taxon>
        <taxon>Euarchontoglires</taxon>
        <taxon>Glires</taxon>
        <taxon>Rodentia</taxon>
        <taxon>Myomorpha</taxon>
        <taxon>Muroidea</taxon>
        <taxon>Muridae</taxon>
        <taxon>Murinae</taxon>
        <taxon>Mus</taxon>
        <taxon>Mus</taxon>
    </lineage>
</organism>
<feature type="chain" id="PRO_0000127519" description="Vesicular acetylcholine transporter">
    <location>
        <begin position="1"/>
        <end position="530"/>
    </location>
</feature>
<feature type="topological domain" description="Cytoplasmic" evidence="3">
    <location>
        <begin position="1"/>
        <end position="33"/>
    </location>
</feature>
<feature type="transmembrane region" description="Helical" evidence="3">
    <location>
        <begin position="34"/>
        <end position="54"/>
    </location>
</feature>
<feature type="topological domain" description="Lumenal, vesicle" evidence="3">
    <location>
        <begin position="55"/>
        <end position="125"/>
    </location>
</feature>
<feature type="transmembrane region" description="Helical" evidence="3">
    <location>
        <begin position="126"/>
        <end position="146"/>
    </location>
</feature>
<feature type="topological domain" description="Cytoplasmic" evidence="3">
    <location>
        <begin position="147"/>
        <end position="152"/>
    </location>
</feature>
<feature type="transmembrane region" description="Helical" evidence="3">
    <location>
        <begin position="153"/>
        <end position="173"/>
    </location>
</feature>
<feature type="topological domain" description="Lumenal, vesicle" evidence="3">
    <location>
        <begin position="174"/>
        <end position="182"/>
    </location>
</feature>
<feature type="transmembrane region" description="Helical" evidence="3">
    <location>
        <begin position="183"/>
        <end position="203"/>
    </location>
</feature>
<feature type="topological domain" description="Cytoplasmic" evidence="3">
    <location>
        <begin position="204"/>
        <end position="213"/>
    </location>
</feature>
<feature type="transmembrane region" description="Helical" evidence="3">
    <location>
        <begin position="214"/>
        <end position="234"/>
    </location>
</feature>
<feature type="topological domain" description="Lumenal, vesicle" evidence="3">
    <location>
        <begin position="235"/>
        <end position="242"/>
    </location>
</feature>
<feature type="transmembrane region" description="Helical" evidence="3">
    <location>
        <begin position="243"/>
        <end position="263"/>
    </location>
</feature>
<feature type="topological domain" description="Cytoplasmic" evidence="3">
    <location>
        <begin position="264"/>
        <end position="288"/>
    </location>
</feature>
<feature type="transmembrane region" description="Helical" evidence="3">
    <location>
        <begin position="289"/>
        <end position="309"/>
    </location>
</feature>
<feature type="topological domain" description="Lumenal, vesicle" evidence="3">
    <location>
        <begin position="310"/>
        <end position="325"/>
    </location>
</feature>
<feature type="transmembrane region" description="Helical" evidence="3">
    <location>
        <begin position="326"/>
        <end position="346"/>
    </location>
</feature>
<feature type="topological domain" description="Cytoplasmic" evidence="3">
    <location>
        <begin position="347"/>
        <end position="356"/>
    </location>
</feature>
<feature type="transmembrane region" description="Helical" evidence="3">
    <location>
        <begin position="357"/>
        <end position="377"/>
    </location>
</feature>
<feature type="topological domain" description="Lumenal, vesicle" evidence="3">
    <location>
        <begin position="378"/>
        <end position="388"/>
    </location>
</feature>
<feature type="transmembrane region" description="Helical" evidence="3">
    <location>
        <begin position="389"/>
        <end position="409"/>
    </location>
</feature>
<feature type="topological domain" description="Cytoplasmic" evidence="3">
    <location>
        <begin position="410"/>
        <end position="422"/>
    </location>
</feature>
<feature type="transmembrane region" description="Helical" evidence="3">
    <location>
        <begin position="423"/>
        <end position="443"/>
    </location>
</feature>
<feature type="topological domain" description="Lumenal, vesicle" evidence="3">
    <location>
        <begin position="444"/>
        <end position="447"/>
    </location>
</feature>
<feature type="transmembrane region" description="Helical" evidence="3">
    <location>
        <begin position="448"/>
        <end position="468"/>
    </location>
</feature>
<feature type="topological domain" description="Cytoplasmic" evidence="3">
    <location>
        <begin position="469"/>
        <end position="530"/>
    </location>
</feature>
<feature type="region of interest" description="Mediates interaction with SEC14L1" evidence="5">
    <location>
        <begin position="471"/>
        <end position="530"/>
    </location>
</feature>
<feature type="region of interest" description="Disordered" evidence="4">
    <location>
        <begin position="504"/>
        <end position="530"/>
    </location>
</feature>
<feature type="site" description="Important for transporter activity" evidence="2">
    <location>
        <position position="193"/>
    </location>
</feature>
<feature type="site" description="Important for transporter activity" evidence="1">
    <location>
        <position position="398"/>
    </location>
</feature>
<feature type="glycosylation site" description="N-linked (GlcNAc...) asparagine" evidence="3">
    <location>
        <position position="89"/>
    </location>
</feature>
<feature type="glycosylation site" description="N-linked (GlcNAc...) asparagine" evidence="3">
    <location>
        <position position="96"/>
    </location>
</feature>